<comment type="function">
    <text evidence="1">Catalyzes the attachment of serine to tRNA(Ser). Is also able to aminoacylate tRNA(Sec) with serine, to form the misacylated tRNA L-seryl-tRNA(Sec), which will be further converted into selenocysteinyl-tRNA(Sec).</text>
</comment>
<comment type="catalytic activity">
    <reaction evidence="1">
        <text>tRNA(Ser) + L-serine + ATP = L-seryl-tRNA(Ser) + AMP + diphosphate + H(+)</text>
        <dbReference type="Rhea" id="RHEA:12292"/>
        <dbReference type="Rhea" id="RHEA-COMP:9669"/>
        <dbReference type="Rhea" id="RHEA-COMP:9703"/>
        <dbReference type="ChEBI" id="CHEBI:15378"/>
        <dbReference type="ChEBI" id="CHEBI:30616"/>
        <dbReference type="ChEBI" id="CHEBI:33019"/>
        <dbReference type="ChEBI" id="CHEBI:33384"/>
        <dbReference type="ChEBI" id="CHEBI:78442"/>
        <dbReference type="ChEBI" id="CHEBI:78533"/>
        <dbReference type="ChEBI" id="CHEBI:456215"/>
        <dbReference type="EC" id="6.1.1.11"/>
    </reaction>
</comment>
<comment type="catalytic activity">
    <reaction evidence="1">
        <text>tRNA(Sec) + L-serine + ATP = L-seryl-tRNA(Sec) + AMP + diphosphate + H(+)</text>
        <dbReference type="Rhea" id="RHEA:42580"/>
        <dbReference type="Rhea" id="RHEA-COMP:9742"/>
        <dbReference type="Rhea" id="RHEA-COMP:10128"/>
        <dbReference type="ChEBI" id="CHEBI:15378"/>
        <dbReference type="ChEBI" id="CHEBI:30616"/>
        <dbReference type="ChEBI" id="CHEBI:33019"/>
        <dbReference type="ChEBI" id="CHEBI:33384"/>
        <dbReference type="ChEBI" id="CHEBI:78442"/>
        <dbReference type="ChEBI" id="CHEBI:78533"/>
        <dbReference type="ChEBI" id="CHEBI:456215"/>
        <dbReference type="EC" id="6.1.1.11"/>
    </reaction>
</comment>
<comment type="pathway">
    <text evidence="1">Aminoacyl-tRNA biosynthesis; selenocysteinyl-tRNA(Sec) biosynthesis; L-seryl-tRNA(Sec) from L-serine and tRNA(Sec): step 1/1.</text>
</comment>
<comment type="subunit">
    <text evidence="1">Homodimer. The tRNA molecule binds across the dimer.</text>
</comment>
<comment type="subcellular location">
    <subcellularLocation>
        <location evidence="1">Cytoplasm</location>
    </subcellularLocation>
</comment>
<comment type="domain">
    <text evidence="1">Consists of two distinct domains, a catalytic core and a N-terminal extension that is involved in tRNA binding.</text>
</comment>
<comment type="similarity">
    <text evidence="1">Belongs to the class-II aminoacyl-tRNA synthetase family. Type-1 seryl-tRNA synthetase subfamily.</text>
</comment>
<protein>
    <recommendedName>
        <fullName evidence="1">Serine--tRNA ligase</fullName>
        <ecNumber evidence="1">6.1.1.11</ecNumber>
    </recommendedName>
    <alternativeName>
        <fullName evidence="1">Seryl-tRNA synthetase</fullName>
        <shortName evidence="1">SerRS</shortName>
    </alternativeName>
    <alternativeName>
        <fullName evidence="1">Seryl-tRNA(Ser/Sec) synthetase</fullName>
    </alternativeName>
</protein>
<accession>Q9ZJD9</accession>
<evidence type="ECO:0000255" key="1">
    <source>
        <dbReference type="HAMAP-Rule" id="MF_00176"/>
    </source>
</evidence>
<proteinExistence type="inferred from homology"/>
<name>SYS_HELPJ</name>
<reference key="1">
    <citation type="journal article" date="1999" name="Nature">
        <title>Genomic sequence comparison of two unrelated isolates of the human gastric pathogen Helicobacter pylori.</title>
        <authorList>
            <person name="Alm R.A."/>
            <person name="Ling L.-S.L."/>
            <person name="Moir D.T."/>
            <person name="King B.L."/>
            <person name="Brown E.D."/>
            <person name="Doig P.C."/>
            <person name="Smith D.R."/>
            <person name="Noonan B."/>
            <person name="Guild B.C."/>
            <person name="deJonge B.L."/>
            <person name="Carmel G."/>
            <person name="Tummino P.J."/>
            <person name="Caruso A."/>
            <person name="Uria-Nickelsen M."/>
            <person name="Mills D.M."/>
            <person name="Ives C."/>
            <person name="Gibson R."/>
            <person name="Merberg D."/>
            <person name="Mills S.D."/>
            <person name="Jiang Q."/>
            <person name="Taylor D.E."/>
            <person name="Vovis G.F."/>
            <person name="Trust T.J."/>
        </authorList>
    </citation>
    <scope>NUCLEOTIDE SEQUENCE [LARGE SCALE GENOMIC DNA]</scope>
    <source>
        <strain>J99 / ATCC 700824</strain>
    </source>
</reference>
<organism>
    <name type="scientific">Helicobacter pylori (strain J99 / ATCC 700824)</name>
    <name type="common">Campylobacter pylori J99</name>
    <dbReference type="NCBI Taxonomy" id="85963"/>
    <lineage>
        <taxon>Bacteria</taxon>
        <taxon>Pseudomonadati</taxon>
        <taxon>Campylobacterota</taxon>
        <taxon>Epsilonproteobacteria</taxon>
        <taxon>Campylobacterales</taxon>
        <taxon>Helicobacteraceae</taxon>
        <taxon>Helicobacter</taxon>
    </lineage>
</organism>
<keyword id="KW-0030">Aminoacyl-tRNA synthetase</keyword>
<keyword id="KW-0067">ATP-binding</keyword>
<keyword id="KW-0963">Cytoplasm</keyword>
<keyword id="KW-0436">Ligase</keyword>
<keyword id="KW-0547">Nucleotide-binding</keyword>
<keyword id="KW-0648">Protein biosynthesis</keyword>
<gene>
    <name evidence="1" type="primary">serS</name>
    <name type="ordered locus">jhp_1373</name>
</gene>
<feature type="chain" id="PRO_0000122060" description="Serine--tRNA ligase">
    <location>
        <begin position="1"/>
        <end position="415"/>
    </location>
</feature>
<feature type="binding site" evidence="1">
    <location>
        <begin position="231"/>
        <end position="233"/>
    </location>
    <ligand>
        <name>L-serine</name>
        <dbReference type="ChEBI" id="CHEBI:33384"/>
    </ligand>
</feature>
<feature type="binding site" evidence="1">
    <location>
        <begin position="262"/>
        <end position="264"/>
    </location>
    <ligand>
        <name>ATP</name>
        <dbReference type="ChEBI" id="CHEBI:30616"/>
    </ligand>
</feature>
<feature type="binding site" evidence="1">
    <location>
        <position position="285"/>
    </location>
    <ligand>
        <name>L-serine</name>
        <dbReference type="ChEBI" id="CHEBI:33384"/>
    </ligand>
</feature>
<feature type="binding site" evidence="1">
    <location>
        <begin position="349"/>
        <end position="352"/>
    </location>
    <ligand>
        <name>ATP</name>
        <dbReference type="ChEBI" id="CHEBI:30616"/>
    </ligand>
</feature>
<feature type="binding site" evidence="1">
    <location>
        <position position="383"/>
    </location>
    <ligand>
        <name>L-serine</name>
        <dbReference type="ChEBI" id="CHEBI:33384"/>
    </ligand>
</feature>
<sequence>MIDRKLLLQDFDKVALSLKKRNHAMDDELERLREAIAHYKKQLIELEGLQAFQNKVSKEFGIKMAQKMDTSDLKKELENNKIKLNELSKSVGEAEQEMDLKLSIIPNLVDEKTPLGASEEDNIEIKKILTPRNFTFKPKEHFELAQQNGWIDFESGVKLAKSRFSVIRGFGAKIYRALIHLMLDFNEKNGFEIIYTPALVNEKMLFGTGQLPKFKEDVFKIENENLYLIPTAEVTLTNLYNDTIISVENLPIKMTAHTPCFRSEAGSAGKDTRGMIRQHQFDKVELVAITHPKESDAMQEHMLESASEILKALELPHRFVQLCSGDLGFSASNTIDIEVWLPGQNCYREISSVSNTRDFQARRAKIRFKENQKNQLVHTLNGSSLAVGRTMVALMENHQQADGSIHIPKALEKYL</sequence>
<dbReference type="EC" id="6.1.1.11" evidence="1"/>
<dbReference type="EMBL" id="AE001439">
    <property type="protein sequence ID" value="AAD06944.1"/>
    <property type="molecule type" value="Genomic_DNA"/>
</dbReference>
<dbReference type="PIR" id="H71814">
    <property type="entry name" value="H71814"/>
</dbReference>
<dbReference type="RefSeq" id="WP_000567093.1">
    <property type="nucleotide sequence ID" value="NC_000921.1"/>
</dbReference>
<dbReference type="SMR" id="Q9ZJD9"/>
<dbReference type="KEGG" id="hpj:jhp_1373"/>
<dbReference type="PATRIC" id="fig|85963.30.peg.1178"/>
<dbReference type="eggNOG" id="COG0172">
    <property type="taxonomic scope" value="Bacteria"/>
</dbReference>
<dbReference type="UniPathway" id="UPA00906">
    <property type="reaction ID" value="UER00895"/>
</dbReference>
<dbReference type="Proteomes" id="UP000000804">
    <property type="component" value="Chromosome"/>
</dbReference>
<dbReference type="GO" id="GO:0005737">
    <property type="term" value="C:cytoplasm"/>
    <property type="evidence" value="ECO:0007669"/>
    <property type="project" value="UniProtKB-SubCell"/>
</dbReference>
<dbReference type="GO" id="GO:0005524">
    <property type="term" value="F:ATP binding"/>
    <property type="evidence" value="ECO:0007669"/>
    <property type="project" value="UniProtKB-UniRule"/>
</dbReference>
<dbReference type="GO" id="GO:0004828">
    <property type="term" value="F:serine-tRNA ligase activity"/>
    <property type="evidence" value="ECO:0007669"/>
    <property type="project" value="UniProtKB-UniRule"/>
</dbReference>
<dbReference type="GO" id="GO:0016260">
    <property type="term" value="P:selenocysteine biosynthetic process"/>
    <property type="evidence" value="ECO:0007669"/>
    <property type="project" value="UniProtKB-UniRule"/>
</dbReference>
<dbReference type="GO" id="GO:0006434">
    <property type="term" value="P:seryl-tRNA aminoacylation"/>
    <property type="evidence" value="ECO:0007669"/>
    <property type="project" value="UniProtKB-UniRule"/>
</dbReference>
<dbReference type="CDD" id="cd00770">
    <property type="entry name" value="SerRS_core"/>
    <property type="match status" value="1"/>
</dbReference>
<dbReference type="Gene3D" id="3.30.930.10">
    <property type="entry name" value="Bira Bifunctional Protein, Domain 2"/>
    <property type="match status" value="1"/>
</dbReference>
<dbReference type="Gene3D" id="1.10.287.40">
    <property type="entry name" value="Serine-tRNA synthetase, tRNA binding domain"/>
    <property type="match status" value="1"/>
</dbReference>
<dbReference type="HAMAP" id="MF_00176">
    <property type="entry name" value="Ser_tRNA_synth_type1"/>
    <property type="match status" value="1"/>
</dbReference>
<dbReference type="InterPro" id="IPR002314">
    <property type="entry name" value="aa-tRNA-synt_IIb"/>
</dbReference>
<dbReference type="InterPro" id="IPR006195">
    <property type="entry name" value="aa-tRNA-synth_II"/>
</dbReference>
<dbReference type="InterPro" id="IPR045864">
    <property type="entry name" value="aa-tRNA-synth_II/BPL/LPL"/>
</dbReference>
<dbReference type="InterPro" id="IPR002317">
    <property type="entry name" value="Ser-tRNA-ligase_type_1"/>
</dbReference>
<dbReference type="InterPro" id="IPR015866">
    <property type="entry name" value="Ser-tRNA-synth_1_N"/>
</dbReference>
<dbReference type="InterPro" id="IPR042103">
    <property type="entry name" value="SerRS_1_N_sf"/>
</dbReference>
<dbReference type="InterPro" id="IPR033729">
    <property type="entry name" value="SerRS_core"/>
</dbReference>
<dbReference type="InterPro" id="IPR010978">
    <property type="entry name" value="tRNA-bd_arm"/>
</dbReference>
<dbReference type="NCBIfam" id="TIGR00414">
    <property type="entry name" value="serS"/>
    <property type="match status" value="1"/>
</dbReference>
<dbReference type="PANTHER" id="PTHR43697:SF1">
    <property type="entry name" value="SERINE--TRNA LIGASE"/>
    <property type="match status" value="1"/>
</dbReference>
<dbReference type="PANTHER" id="PTHR43697">
    <property type="entry name" value="SERYL-TRNA SYNTHETASE"/>
    <property type="match status" value="1"/>
</dbReference>
<dbReference type="Pfam" id="PF02403">
    <property type="entry name" value="Seryl_tRNA_N"/>
    <property type="match status" value="1"/>
</dbReference>
<dbReference type="Pfam" id="PF00587">
    <property type="entry name" value="tRNA-synt_2b"/>
    <property type="match status" value="1"/>
</dbReference>
<dbReference type="PIRSF" id="PIRSF001529">
    <property type="entry name" value="Ser-tRNA-synth_IIa"/>
    <property type="match status" value="1"/>
</dbReference>
<dbReference type="PRINTS" id="PR00981">
    <property type="entry name" value="TRNASYNTHSER"/>
</dbReference>
<dbReference type="SUPFAM" id="SSF55681">
    <property type="entry name" value="Class II aaRS and biotin synthetases"/>
    <property type="match status" value="1"/>
</dbReference>
<dbReference type="SUPFAM" id="SSF46589">
    <property type="entry name" value="tRNA-binding arm"/>
    <property type="match status" value="1"/>
</dbReference>
<dbReference type="PROSITE" id="PS50862">
    <property type="entry name" value="AA_TRNA_LIGASE_II"/>
    <property type="match status" value="1"/>
</dbReference>